<protein>
    <recommendedName>
        <fullName evidence="1">Non-structural protein 1</fullName>
        <shortName evidence="1">NS1</shortName>
    </recommendedName>
    <alternativeName>
        <fullName evidence="1">NS1A</fullName>
    </alternativeName>
</protein>
<name>NS1_I56A3</name>
<proteinExistence type="inferred from homology"/>
<sequence length="230" mass="26115">MDSNTVSSFQVDCFLWHIRKRFADQKMGDAPFLDRLRRDQKSLKGRSSTLGLDIESSTLAGRQIVKRILKEESDSEPKGTITSVPTSYYLTDMTLEEMSRAWFMLIPNQKRVGSLCIRMDQAIMDKEITLKANFSVVFNKLETLTLLRAFTDDEAIIGEILPIPSLPGHTNEDVKNAIEILIGGLEWNNNTVRISEILQRFTWRNSNENGGFLLSPKQKQKMEGTTGPEV</sequence>
<keyword id="KW-0025">Alternative splicing</keyword>
<keyword id="KW-1262">Eukaryotic host gene expression shutoff by virus</keyword>
<keyword id="KW-1035">Host cytoplasm</keyword>
<keyword id="KW-1190">Host gene expression shutoff by virus</keyword>
<keyword id="KW-1192">Host mRNA suppression by virus</keyword>
<keyword id="KW-1048">Host nucleus</keyword>
<keyword id="KW-0945">Host-virus interaction</keyword>
<keyword id="KW-1090">Inhibition of host innate immune response by virus</keyword>
<keyword id="KW-1114">Inhibition of host interferon signaling pathway by virus</keyword>
<keyword id="KW-1102">Inhibition of host PKR by virus</keyword>
<keyword id="KW-1103">Inhibition of host pre-mRNA processing by virus</keyword>
<keyword id="KW-1088">Inhibition of host RIG-I by virus</keyword>
<keyword id="KW-1113">Inhibition of host RLR pathway by virus</keyword>
<keyword id="KW-0922">Interferon antiviral system evasion</keyword>
<keyword id="KW-0694">RNA-binding</keyword>
<keyword id="KW-0832">Ubl conjugation</keyword>
<keyword id="KW-0899">Viral immunoevasion</keyword>
<comment type="function">
    <text evidence="1">Inhibits post-transcriptional processing of cellular pre-mRNA, by binding and inhibiting two cellular proteins that are required for the 3'-end processing of cellular pre-mRNAs: the 30 kDa cleavage and polyadenylation specificity factor/CPSF4 and the poly(A)-binding protein 2/PABPN1. In turn, unprocessed 3' end pre-mRNAs accumulate in the host nucleus and are no longer exported to the cytoplasm. Cellular protein synthesis is thereby shut off very early after virus infection. Viral protein synthesis is not affected by the inhibition of the cellular 3' end processing machinery because the poly(A) tails of viral mRNAs are produced by the viral polymerase through a stuttering mechanism. Prevents the establishment of the cellular antiviral state by inhibiting TRIM25-mediated RIGI ubiquitination, which normally triggers the antiviral transduction signal that leads to the activation of type I IFN genes by transcription factors IRF3 and IRF7. Also binds poly(A) and U6 snRNA. Inhibits the integrated stress response (ISR) in the infected cell by blocking dsRNA binding by EIF2AK2/PKR and further phosphorylation of EIF2S1/EIF-2ALPHA. Stress granule formation is thus inhibited, which allows protein synthesis and viral replication.</text>
</comment>
<comment type="subunit">
    <text evidence="1">Homodimer. Interacts with host TRIM25 (via coiled coil); this interaction specifically inhibits TRIM25 multimerization and TRIM25-mediated RIGI CARD ubiquitination. Interacts with human EIF2AK2/PKR, CPSF4, IVNS1ABP and PABPN1.</text>
</comment>
<comment type="subcellular location">
    <subcellularLocation>
        <location evidence="1">Host nucleus</location>
    </subcellularLocation>
    <subcellularLocation>
        <location evidence="1">Host cytoplasm</location>
    </subcellularLocation>
    <text evidence="1">In uninfected, transfected cells, NS1 is localized in the nucleus. Only in virus infected cells, the nuclear export signal is unveiled, presumably by a viral protein, and a fraction of NS1 is exported in the cytoplasm.</text>
</comment>
<comment type="alternative products">
    <event type="alternative splicing"/>
    <isoform>
        <id>O92551-1</id>
        <name>NS1</name>
        <sequence type="displayed"/>
    </isoform>
    <isoform>
        <id>Q20P38-1</id>
        <name>NEP</name>
        <name>NS2</name>
        <sequence type="external"/>
    </isoform>
</comment>
<comment type="domain">
    <text evidence="1">The dsRNA-binding region is required for suppression of RNA silencing.</text>
</comment>
<comment type="PTM">
    <text evidence="1">Upon interferon induction, ISGylated via host HERC5; this results in the impairment of NS1 interaction with RNA targets due to its inability to form homodimers and to interact with host EIF2AK2/PKR.</text>
</comment>
<comment type="similarity">
    <text evidence="1">Belongs to the influenza A viruses NS1 family.</text>
</comment>
<dbReference type="EMBL" id="U49489">
    <property type="protein sequence ID" value="AAB51005.1"/>
    <property type="molecule type" value="Genomic_RNA"/>
</dbReference>
<dbReference type="EMBL" id="M80944">
    <property type="protein sequence ID" value="AAC35566.1"/>
    <property type="molecule type" value="Genomic_RNA"/>
</dbReference>
<dbReference type="EMBL" id="CY005804">
    <property type="protein sequence ID" value="ABB20503.1"/>
    <property type="molecule type" value="Genomic_RNA"/>
</dbReference>
<dbReference type="SMR" id="O92551"/>
<dbReference type="IntAct" id="O92551">
    <property type="interactions" value="19"/>
</dbReference>
<dbReference type="MINT" id="O92551"/>
<dbReference type="Proteomes" id="UP000121173">
    <property type="component" value="Genome"/>
</dbReference>
<dbReference type="GO" id="GO:0030430">
    <property type="term" value="C:host cell cytoplasm"/>
    <property type="evidence" value="ECO:0007669"/>
    <property type="project" value="UniProtKB-SubCell"/>
</dbReference>
<dbReference type="GO" id="GO:0042025">
    <property type="term" value="C:host cell nucleus"/>
    <property type="evidence" value="ECO:0007669"/>
    <property type="project" value="UniProtKB-SubCell"/>
</dbReference>
<dbReference type="GO" id="GO:0030291">
    <property type="term" value="F:protein serine/threonine kinase inhibitor activity"/>
    <property type="evidence" value="ECO:0007669"/>
    <property type="project" value="UniProtKB-KW"/>
</dbReference>
<dbReference type="GO" id="GO:0003723">
    <property type="term" value="F:RNA binding"/>
    <property type="evidence" value="ECO:0007669"/>
    <property type="project" value="UniProtKB-KW"/>
</dbReference>
<dbReference type="GO" id="GO:0039540">
    <property type="term" value="P:symbiont-mediated suppression of host cytoplasmic pattern recognition receptor signaling pathway via inhibition of RIG-I activity"/>
    <property type="evidence" value="ECO:0007669"/>
    <property type="project" value="UniProtKB-KW"/>
</dbReference>
<dbReference type="GO" id="GO:0039657">
    <property type="term" value="P:symbiont-mediated suppression of host gene expression"/>
    <property type="evidence" value="ECO:0007669"/>
    <property type="project" value="UniProtKB-KW"/>
</dbReference>
<dbReference type="GO" id="GO:0039524">
    <property type="term" value="P:symbiont-mediated suppression of host mRNA processing"/>
    <property type="evidence" value="ECO:0007669"/>
    <property type="project" value="UniProtKB-KW"/>
</dbReference>
<dbReference type="GO" id="GO:0039580">
    <property type="term" value="P:symbiont-mediated suppression of host PKR/eIFalpha signaling"/>
    <property type="evidence" value="ECO:0007669"/>
    <property type="project" value="UniProtKB-KW"/>
</dbReference>
<dbReference type="GO" id="GO:0039502">
    <property type="term" value="P:symbiont-mediated suppression of host type I interferon-mediated signaling pathway"/>
    <property type="evidence" value="ECO:0007669"/>
    <property type="project" value="UniProtKB-KW"/>
</dbReference>
<dbReference type="FunFam" id="1.10.287.10:FF:000001">
    <property type="entry name" value="Non-structural protein 1"/>
    <property type="match status" value="1"/>
</dbReference>
<dbReference type="Gene3D" id="3.30.420.330">
    <property type="entry name" value="Influenza virus non-structural protein, effector domain"/>
    <property type="match status" value="1"/>
</dbReference>
<dbReference type="Gene3D" id="1.10.287.10">
    <property type="entry name" value="S15/NS1, RNA-binding"/>
    <property type="match status" value="1"/>
</dbReference>
<dbReference type="HAMAP" id="MF_04066">
    <property type="entry name" value="INFV_NS1"/>
    <property type="match status" value="1"/>
</dbReference>
<dbReference type="InterPro" id="IPR004208">
    <property type="entry name" value="NS1"/>
</dbReference>
<dbReference type="InterPro" id="IPR000256">
    <property type="entry name" value="NS1A"/>
</dbReference>
<dbReference type="InterPro" id="IPR038064">
    <property type="entry name" value="NS1A_effect_dom-like_sf"/>
</dbReference>
<dbReference type="InterPro" id="IPR009068">
    <property type="entry name" value="uS15_NS1_RNA-bd_sf"/>
</dbReference>
<dbReference type="Pfam" id="PF00600">
    <property type="entry name" value="Flu_NS1"/>
    <property type="match status" value="1"/>
</dbReference>
<dbReference type="SUPFAM" id="SSF143021">
    <property type="entry name" value="Ns1 effector domain-like"/>
    <property type="match status" value="1"/>
</dbReference>
<dbReference type="SUPFAM" id="SSF47060">
    <property type="entry name" value="S15/NS1 RNA-binding domain"/>
    <property type="match status" value="1"/>
</dbReference>
<feature type="chain" id="PRO_0000324239" description="Non-structural protein 1">
    <location>
        <begin position="1"/>
        <end position="230"/>
    </location>
</feature>
<feature type="region of interest" description="RNA-binding and homodimerization" evidence="1">
    <location>
        <begin position="1"/>
        <end position="73"/>
    </location>
</feature>
<feature type="region of interest" description="CPSF4-binding" evidence="1">
    <location>
        <begin position="180"/>
        <end position="215"/>
    </location>
</feature>
<feature type="region of interest" description="PABPN1-binding" evidence="1">
    <location>
        <begin position="223"/>
        <end position="230"/>
    </location>
</feature>
<feature type="short sequence motif" description="Nuclear localization signal" evidence="1">
    <location>
        <begin position="34"/>
        <end position="38"/>
    </location>
</feature>
<feature type="short sequence motif" description="Nuclear export signal" evidence="1">
    <location>
        <begin position="137"/>
        <end position="146"/>
    </location>
</feature>
<reference key="1">
    <citation type="journal article" date="1996" name="J. Virol.">
        <title>Emergence of avian H1N1 influenza viruses in pigs in China.</title>
        <authorList>
            <person name="Guan Y."/>
            <person name="Shortridge K.F."/>
            <person name="Krauss S."/>
            <person name="Li P.H."/>
            <person name="Kawaoka Y."/>
            <person name="Webster R.G."/>
        </authorList>
    </citation>
    <scope>NUCLEOTIDE SEQUENCE [GENOMIC RNA] OF 4-230</scope>
</reference>
<reference key="2">
    <citation type="journal article" date="1998" name="Virus Res.">
        <title>Influence of host species on the evolution of the nonstructural (NS) gene of influenza A viruses.</title>
        <authorList>
            <person name="Kawaoka Y."/>
            <person name="Gorman O.T."/>
            <person name="Ito T."/>
            <person name="Wells K."/>
            <person name="Donis R.O."/>
            <person name="Castrucci M.R."/>
            <person name="Donatelli I."/>
            <person name="Webster R.G."/>
        </authorList>
    </citation>
    <scope>NUCLEOTIDE SEQUENCE [GENOMIC RNA]</scope>
</reference>
<reference key="3">
    <citation type="journal article" date="2006" name="Science">
        <title>Large-scale sequence analysis of avian influenza isolates.</title>
        <authorList>
            <person name="Obenauer J.C."/>
            <person name="Denson J."/>
            <person name="Mehta P.K."/>
            <person name="Su X."/>
            <person name="Mukatira S."/>
            <person name="Finkelstein D.B."/>
            <person name="Xu X."/>
            <person name="Wang J."/>
            <person name="Ma J."/>
            <person name="Fan Y."/>
            <person name="Rakestraw K.M."/>
            <person name="Webster R.G."/>
            <person name="Hoffmann E."/>
            <person name="Krauss S."/>
            <person name="Zheng J."/>
            <person name="Zhang Z."/>
            <person name="Naeve C.W."/>
        </authorList>
    </citation>
    <scope>NUCLEOTIDE SEQUENCE [GENOMIC RNA]</scope>
</reference>
<evidence type="ECO:0000255" key="1">
    <source>
        <dbReference type="HAMAP-Rule" id="MF_04066"/>
    </source>
</evidence>
<gene>
    <name evidence="1" type="primary">NS</name>
</gene>
<accession>O92551</accession>
<accession>O09693</accession>
<accession>Q20P37</accession>
<organismHost>
    <name type="scientific">Aves</name>
    <dbReference type="NCBI Taxonomy" id="8782"/>
</organismHost>
<organismHost>
    <name type="scientific">Equus caballus</name>
    <name type="common">Horse</name>
    <dbReference type="NCBI Taxonomy" id="9796"/>
</organismHost>
<organismHost>
    <name type="scientific">Homo sapiens</name>
    <name type="common">Human</name>
    <dbReference type="NCBI Taxonomy" id="9606"/>
</organismHost>
<organismHost>
    <name type="scientific">Phocidae</name>
    <name type="common">true seals</name>
    <dbReference type="NCBI Taxonomy" id="9709"/>
</organismHost>
<organism>
    <name type="scientific">Influenza A virus (strain A/Equine/Prague/1/1956 H7N7)</name>
    <dbReference type="NCBI Taxonomy" id="380337"/>
    <lineage>
        <taxon>Viruses</taxon>
        <taxon>Riboviria</taxon>
        <taxon>Orthornavirae</taxon>
        <taxon>Negarnaviricota</taxon>
        <taxon>Polyploviricotina</taxon>
        <taxon>Insthoviricetes</taxon>
        <taxon>Articulavirales</taxon>
        <taxon>Orthomyxoviridae</taxon>
        <taxon>Alphainfluenzavirus</taxon>
        <taxon>Alphainfluenzavirus influenzae</taxon>
        <taxon>Influenza A virus</taxon>
    </lineage>
</organism>